<proteinExistence type="inferred from homology"/>
<sequence length="225" mass="25554">MDSNTVSSFQVDCFLWHVRKRFADQELGDAPFLDRLRRDQKSLRGRGNTLGLDIETATCAGKQIVERILEEESDEALKMPAPRYLTDMTLEEMSRDWFMLMPKQKVAGSLCIKMDQAIMDKNIILKANFSVIFDRLETLILLRAFTEEGAIVGEISPLPSLPGHTDEDVKNAIGVLIGGLEWNDNTVRVSETLQRFAWRSSDEDGRPPLPPNQKRKMARTIESEV</sequence>
<protein>
    <recommendedName>
        <fullName evidence="1">Non-structural protein 1</fullName>
        <shortName evidence="1">NS1</shortName>
    </recommendedName>
    <alternativeName>
        <fullName evidence="1">NS1A</fullName>
    </alternativeName>
</protein>
<keyword id="KW-0025">Alternative splicing</keyword>
<keyword id="KW-1262">Eukaryotic host gene expression shutoff by virus</keyword>
<keyword id="KW-1035">Host cytoplasm</keyword>
<keyword id="KW-1190">Host gene expression shutoff by virus</keyword>
<keyword id="KW-1192">Host mRNA suppression by virus</keyword>
<keyword id="KW-1048">Host nucleus</keyword>
<keyword id="KW-0945">Host-virus interaction</keyword>
<keyword id="KW-1090">Inhibition of host innate immune response by virus</keyword>
<keyword id="KW-1114">Inhibition of host interferon signaling pathway by virus</keyword>
<keyword id="KW-1102">Inhibition of host PKR by virus</keyword>
<keyword id="KW-1103">Inhibition of host pre-mRNA processing by virus</keyword>
<keyword id="KW-1088">Inhibition of host RIG-I by virus</keyword>
<keyword id="KW-1113">Inhibition of host RLR pathway by virus</keyword>
<keyword id="KW-0922">Interferon antiviral system evasion</keyword>
<keyword id="KW-0694">RNA-binding</keyword>
<keyword id="KW-0832">Ubl conjugation</keyword>
<keyword id="KW-0899">Viral immunoevasion</keyword>
<organism>
    <name type="scientific">Influenza A virus (strain A/Chicken/Hong Kong/FY150/2001 H5N1 genotype D)</name>
    <dbReference type="NCBI Taxonomy" id="222142"/>
    <lineage>
        <taxon>Viruses</taxon>
        <taxon>Riboviria</taxon>
        <taxon>Orthornavirae</taxon>
        <taxon>Negarnaviricota</taxon>
        <taxon>Polyploviricotina</taxon>
        <taxon>Insthoviricetes</taxon>
        <taxon>Articulavirales</taxon>
        <taxon>Orthomyxoviridae</taxon>
        <taxon>Alphainfluenzavirus</taxon>
        <taxon>Alphainfluenzavirus influenzae</taxon>
        <taxon>Influenza A virus</taxon>
    </lineage>
</organism>
<gene>
    <name evidence="1" type="primary">NS</name>
</gene>
<feature type="chain" id="PRO_0000311745" description="Non-structural protein 1">
    <location>
        <begin position="1"/>
        <end position="225"/>
    </location>
</feature>
<feature type="region of interest" description="RNA-binding and homodimerization" evidence="1">
    <location>
        <begin position="1"/>
        <end position="73"/>
    </location>
</feature>
<feature type="region of interest" description="CPSF4-binding" evidence="1">
    <location>
        <begin position="175"/>
        <end position="210"/>
    </location>
</feature>
<feature type="region of interest" description="Disordered" evidence="2">
    <location>
        <begin position="200"/>
        <end position="225"/>
    </location>
</feature>
<feature type="region of interest" description="PABPN1-binding" evidence="1">
    <location>
        <begin position="218"/>
        <end position="225"/>
    </location>
</feature>
<feature type="short sequence motif" description="Nuclear localization signal" evidence="1">
    <location>
        <begin position="34"/>
        <end position="38"/>
    </location>
</feature>
<feature type="short sequence motif" description="Nuclear export signal" evidence="1">
    <location>
        <begin position="132"/>
        <end position="141"/>
    </location>
</feature>
<reference key="1">
    <citation type="journal article" date="2002" name="Proc. Natl. Acad. Sci. U.S.A.">
        <title>Emergence of multiple genotypes of H5N1 avian influenza viruses in Hong Kong SAR.</title>
        <authorList>
            <person name="Guan Y."/>
            <person name="Peiris J.S.M."/>
            <person name="Lipatov A.S."/>
            <person name="Ellis T.M."/>
            <person name="Dyrting K.C."/>
            <person name="Krauss S."/>
            <person name="Zhang L.J."/>
            <person name="Webster R.G."/>
            <person name="Shortridge K.F."/>
        </authorList>
    </citation>
    <scope>NUCLEOTIDE SEQUENCE [GENOMIC RNA]</scope>
</reference>
<comment type="function">
    <text evidence="1">Inhibits post-transcriptional processing of cellular pre-mRNA, by binding and inhibiting two cellular proteins that are required for the 3'-end processing of cellular pre-mRNAs: the 30 kDa cleavage and polyadenylation specificity factor/CPSF4 and the poly(A)-binding protein 2/PABPN1. In turn, unprocessed 3' end pre-mRNAs accumulate in the host nucleus and are no longer exported to the cytoplasm. Cellular protein synthesis is thereby shut off very early after virus infection. Viral protein synthesis is not affected by the inhibition of the cellular 3' end processing machinery because the poly(A) tails of viral mRNAs are produced by the viral polymerase through a stuttering mechanism. Prevents the establishment of the cellular antiviral state by inhibiting TRIM25-mediated RIGI ubiquitination, which normally triggers the antiviral transduction signal that leads to the activation of type I IFN genes by transcription factors IRF3 and IRF7. Also binds poly(A) and U6 snRNA. Inhibits the integrated stress response (ISR) in the infected cell by blocking dsRNA binding by EIF2AK2/PKR and further phosphorylation of EIF2S1/EIF-2ALPHA. Stress granule formation is thus inhibited, which allows protein synthesis and viral replication.</text>
</comment>
<comment type="subunit">
    <text evidence="1">Homodimer. Interacts with host TRIM25 (via coiled coil); this interaction specifically inhibits TRIM25 multimerization and TRIM25-mediated RIGI CARD ubiquitination. Interacts with human EIF2AK2/PKR, CPSF4, IVNS1ABP and PABPN1.</text>
</comment>
<comment type="subcellular location">
    <subcellularLocation>
        <location evidence="1">Host nucleus</location>
    </subcellularLocation>
    <subcellularLocation>
        <location evidence="1">Host cytoplasm</location>
    </subcellularLocation>
    <text evidence="1">In uninfected, transfected cells, NS1 is localized in the nucleus. Only in virus infected cells, the nuclear export signal is unveiled, presumably by a viral protein, and a fraction of NS1 is exported in the cytoplasm.</text>
</comment>
<comment type="alternative products">
    <event type="alternative splicing"/>
    <isoform>
        <id>Q809X8-1</id>
        <name>NS1</name>
        <sequence type="displayed"/>
    </isoform>
    <isoform>
        <id>P0C5U0-1</id>
        <name>NEP</name>
        <name>NS2</name>
        <sequence type="external"/>
    </isoform>
</comment>
<comment type="domain">
    <text evidence="1">The dsRNA-binding region is required for suppression of RNA silencing.</text>
</comment>
<comment type="PTM">
    <text evidence="1">Upon interferon induction, ISGylated via host HERC5; this results in the impairment of NS1 interaction with RNA targets due to its inability to form homodimers and to interact with host EIF2AK2/PKR.</text>
</comment>
<comment type="similarity">
    <text evidence="1">Belongs to the influenza A viruses NS1 family.</text>
</comment>
<accession>Q809X8</accession>
<name>NS1_I01A2</name>
<evidence type="ECO:0000255" key="1">
    <source>
        <dbReference type="HAMAP-Rule" id="MF_04066"/>
    </source>
</evidence>
<evidence type="ECO:0000256" key="2">
    <source>
        <dbReference type="SAM" id="MobiDB-lite"/>
    </source>
</evidence>
<dbReference type="EMBL" id="AF509069">
    <property type="protein sequence ID" value="AAO52912.1"/>
    <property type="molecule type" value="Genomic_DNA"/>
</dbReference>
<dbReference type="SMR" id="Q809X8"/>
<dbReference type="GO" id="GO:0030430">
    <property type="term" value="C:host cell cytoplasm"/>
    <property type="evidence" value="ECO:0007669"/>
    <property type="project" value="UniProtKB-SubCell"/>
</dbReference>
<dbReference type="GO" id="GO:0042025">
    <property type="term" value="C:host cell nucleus"/>
    <property type="evidence" value="ECO:0007669"/>
    <property type="project" value="UniProtKB-SubCell"/>
</dbReference>
<dbReference type="GO" id="GO:0030291">
    <property type="term" value="F:protein serine/threonine kinase inhibitor activity"/>
    <property type="evidence" value="ECO:0007669"/>
    <property type="project" value="UniProtKB-KW"/>
</dbReference>
<dbReference type="GO" id="GO:0003723">
    <property type="term" value="F:RNA binding"/>
    <property type="evidence" value="ECO:0007669"/>
    <property type="project" value="UniProtKB-KW"/>
</dbReference>
<dbReference type="GO" id="GO:0039540">
    <property type="term" value="P:symbiont-mediated suppression of host cytoplasmic pattern recognition receptor signaling pathway via inhibition of RIG-I activity"/>
    <property type="evidence" value="ECO:0007669"/>
    <property type="project" value="UniProtKB-KW"/>
</dbReference>
<dbReference type="GO" id="GO:0039657">
    <property type="term" value="P:symbiont-mediated suppression of host gene expression"/>
    <property type="evidence" value="ECO:0007669"/>
    <property type="project" value="UniProtKB-KW"/>
</dbReference>
<dbReference type="GO" id="GO:0039524">
    <property type="term" value="P:symbiont-mediated suppression of host mRNA processing"/>
    <property type="evidence" value="ECO:0007669"/>
    <property type="project" value="UniProtKB-KW"/>
</dbReference>
<dbReference type="GO" id="GO:0039580">
    <property type="term" value="P:symbiont-mediated suppression of host PKR/eIFalpha signaling"/>
    <property type="evidence" value="ECO:0007669"/>
    <property type="project" value="UniProtKB-KW"/>
</dbReference>
<dbReference type="GO" id="GO:0039502">
    <property type="term" value="P:symbiont-mediated suppression of host type I interferon-mediated signaling pathway"/>
    <property type="evidence" value="ECO:0007669"/>
    <property type="project" value="UniProtKB-KW"/>
</dbReference>
<dbReference type="FunFam" id="1.10.287.10:FF:000001">
    <property type="entry name" value="Non-structural protein 1"/>
    <property type="match status" value="1"/>
</dbReference>
<dbReference type="FunFam" id="3.30.420.330:FF:000001">
    <property type="entry name" value="Non-structural protein 1"/>
    <property type="match status" value="1"/>
</dbReference>
<dbReference type="Gene3D" id="3.30.420.330">
    <property type="entry name" value="Influenza virus non-structural protein, effector domain"/>
    <property type="match status" value="1"/>
</dbReference>
<dbReference type="Gene3D" id="1.10.287.10">
    <property type="entry name" value="S15/NS1, RNA-binding"/>
    <property type="match status" value="1"/>
</dbReference>
<dbReference type="HAMAP" id="MF_04066">
    <property type="entry name" value="INFV_NS1"/>
    <property type="match status" value="1"/>
</dbReference>
<dbReference type="InterPro" id="IPR004208">
    <property type="entry name" value="NS1"/>
</dbReference>
<dbReference type="InterPro" id="IPR000256">
    <property type="entry name" value="NS1A"/>
</dbReference>
<dbReference type="InterPro" id="IPR038064">
    <property type="entry name" value="NS1A_effect_dom-like_sf"/>
</dbReference>
<dbReference type="InterPro" id="IPR009068">
    <property type="entry name" value="uS15_NS1_RNA-bd_sf"/>
</dbReference>
<dbReference type="Pfam" id="PF00600">
    <property type="entry name" value="Flu_NS1"/>
    <property type="match status" value="1"/>
</dbReference>
<dbReference type="SUPFAM" id="SSF143021">
    <property type="entry name" value="Ns1 effector domain-like"/>
    <property type="match status" value="1"/>
</dbReference>
<dbReference type="SUPFAM" id="SSF47060">
    <property type="entry name" value="S15/NS1 RNA-binding domain"/>
    <property type="match status" value="1"/>
</dbReference>
<organismHost>
    <name type="scientific">Aves</name>
    <dbReference type="NCBI Taxonomy" id="8782"/>
</organismHost>
<organismHost>
    <name type="scientific">Felis catus</name>
    <name type="common">Cat</name>
    <name type="synonym">Felis silvestris catus</name>
    <dbReference type="NCBI Taxonomy" id="9685"/>
</organismHost>
<organismHost>
    <name type="scientific">Homo sapiens</name>
    <name type="common">Human</name>
    <dbReference type="NCBI Taxonomy" id="9606"/>
</organismHost>
<organismHost>
    <name type="scientific">Panthera pardus</name>
    <name type="common">Leopard</name>
    <name type="synonym">Felis pardus</name>
    <dbReference type="NCBI Taxonomy" id="9691"/>
</organismHost>
<organismHost>
    <name type="scientific">Panthera tigris</name>
    <name type="common">Tiger</name>
    <dbReference type="NCBI Taxonomy" id="9694"/>
</organismHost>
<organismHost>
    <name type="scientific">Sus scrofa</name>
    <name type="common">Pig</name>
    <dbReference type="NCBI Taxonomy" id="9823"/>
</organismHost>